<feature type="chain" id="PRO_0000313398" description="DNA ligase">
    <location>
        <begin position="1"/>
        <end position="690"/>
    </location>
</feature>
<feature type="domain" description="BRCT" evidence="1">
    <location>
        <begin position="610"/>
        <end position="690"/>
    </location>
</feature>
<feature type="active site" description="N6-AMP-lysine intermediate" evidence="1">
    <location>
        <position position="131"/>
    </location>
</feature>
<feature type="binding site" evidence="1">
    <location>
        <begin position="43"/>
        <end position="47"/>
    </location>
    <ligand>
        <name>NAD(+)</name>
        <dbReference type="ChEBI" id="CHEBI:57540"/>
    </ligand>
</feature>
<feature type="binding site" evidence="1">
    <location>
        <begin position="92"/>
        <end position="93"/>
    </location>
    <ligand>
        <name>NAD(+)</name>
        <dbReference type="ChEBI" id="CHEBI:57540"/>
    </ligand>
</feature>
<feature type="binding site" evidence="1">
    <location>
        <position position="129"/>
    </location>
    <ligand>
        <name>NAD(+)</name>
        <dbReference type="ChEBI" id="CHEBI:57540"/>
    </ligand>
</feature>
<feature type="binding site" evidence="1">
    <location>
        <position position="152"/>
    </location>
    <ligand>
        <name>NAD(+)</name>
        <dbReference type="ChEBI" id="CHEBI:57540"/>
    </ligand>
</feature>
<feature type="binding site" evidence="1">
    <location>
        <position position="188"/>
    </location>
    <ligand>
        <name>NAD(+)</name>
        <dbReference type="ChEBI" id="CHEBI:57540"/>
    </ligand>
</feature>
<feature type="binding site" evidence="1">
    <location>
        <position position="309"/>
    </location>
    <ligand>
        <name>NAD(+)</name>
        <dbReference type="ChEBI" id="CHEBI:57540"/>
    </ligand>
</feature>
<feature type="binding site" evidence="1">
    <location>
        <position position="333"/>
    </location>
    <ligand>
        <name>NAD(+)</name>
        <dbReference type="ChEBI" id="CHEBI:57540"/>
    </ligand>
</feature>
<feature type="binding site" evidence="1">
    <location>
        <position position="427"/>
    </location>
    <ligand>
        <name>Zn(2+)</name>
        <dbReference type="ChEBI" id="CHEBI:29105"/>
    </ligand>
</feature>
<feature type="binding site" evidence="1">
    <location>
        <position position="430"/>
    </location>
    <ligand>
        <name>Zn(2+)</name>
        <dbReference type="ChEBI" id="CHEBI:29105"/>
    </ligand>
</feature>
<feature type="binding site" evidence="1">
    <location>
        <position position="445"/>
    </location>
    <ligand>
        <name>Zn(2+)</name>
        <dbReference type="ChEBI" id="CHEBI:29105"/>
    </ligand>
</feature>
<feature type="binding site" evidence="1">
    <location>
        <position position="451"/>
    </location>
    <ligand>
        <name>Zn(2+)</name>
        <dbReference type="ChEBI" id="CHEBI:29105"/>
    </ligand>
</feature>
<proteinExistence type="inferred from homology"/>
<name>DNLJ_ALBFT</name>
<protein>
    <recommendedName>
        <fullName evidence="1">DNA ligase</fullName>
        <ecNumber evidence="1">6.5.1.2</ecNumber>
    </recommendedName>
    <alternativeName>
        <fullName evidence="1">Polydeoxyribonucleotide synthase [NAD(+)]</fullName>
    </alternativeName>
</protein>
<evidence type="ECO:0000255" key="1">
    <source>
        <dbReference type="HAMAP-Rule" id="MF_01588"/>
    </source>
</evidence>
<keyword id="KW-0227">DNA damage</keyword>
<keyword id="KW-0234">DNA repair</keyword>
<keyword id="KW-0235">DNA replication</keyword>
<keyword id="KW-0436">Ligase</keyword>
<keyword id="KW-0460">Magnesium</keyword>
<keyword id="KW-0464">Manganese</keyword>
<keyword id="KW-0479">Metal-binding</keyword>
<keyword id="KW-0520">NAD</keyword>
<keyword id="KW-1185">Reference proteome</keyword>
<keyword id="KW-0862">Zinc</keyword>
<reference key="1">
    <citation type="submission" date="2006-02" db="EMBL/GenBank/DDBJ databases">
        <title>Complete sequence of chromosome of Rhodoferax ferrireducens DSM 15236.</title>
        <authorList>
            <person name="Copeland A."/>
            <person name="Lucas S."/>
            <person name="Lapidus A."/>
            <person name="Barry K."/>
            <person name="Detter J.C."/>
            <person name="Glavina del Rio T."/>
            <person name="Hammon N."/>
            <person name="Israni S."/>
            <person name="Pitluck S."/>
            <person name="Brettin T."/>
            <person name="Bruce D."/>
            <person name="Han C."/>
            <person name="Tapia R."/>
            <person name="Gilna P."/>
            <person name="Kiss H."/>
            <person name="Schmutz J."/>
            <person name="Larimer F."/>
            <person name="Land M."/>
            <person name="Kyrpides N."/>
            <person name="Ivanova N."/>
            <person name="Richardson P."/>
        </authorList>
    </citation>
    <scope>NUCLEOTIDE SEQUENCE [LARGE SCALE GENOMIC DNA]</scope>
    <source>
        <strain>ATCC BAA-621 / DSM 15236 / T118</strain>
    </source>
</reference>
<accession>Q21WC8</accession>
<dbReference type="EC" id="6.5.1.2" evidence="1"/>
<dbReference type="EMBL" id="CP000267">
    <property type="protein sequence ID" value="ABD69925.1"/>
    <property type="molecule type" value="Genomic_DNA"/>
</dbReference>
<dbReference type="RefSeq" id="WP_011464493.1">
    <property type="nucleotide sequence ID" value="NC_007908.1"/>
</dbReference>
<dbReference type="SMR" id="Q21WC8"/>
<dbReference type="STRING" id="338969.Rfer_2201"/>
<dbReference type="KEGG" id="rfr:Rfer_2201"/>
<dbReference type="eggNOG" id="COG0272">
    <property type="taxonomic scope" value="Bacteria"/>
</dbReference>
<dbReference type="HOGENOM" id="CLU_007764_2_1_4"/>
<dbReference type="OrthoDB" id="9759736at2"/>
<dbReference type="Proteomes" id="UP000008332">
    <property type="component" value="Chromosome"/>
</dbReference>
<dbReference type="GO" id="GO:0003677">
    <property type="term" value="F:DNA binding"/>
    <property type="evidence" value="ECO:0007669"/>
    <property type="project" value="InterPro"/>
</dbReference>
<dbReference type="GO" id="GO:0003911">
    <property type="term" value="F:DNA ligase (NAD+) activity"/>
    <property type="evidence" value="ECO:0007669"/>
    <property type="project" value="UniProtKB-UniRule"/>
</dbReference>
<dbReference type="GO" id="GO:0046872">
    <property type="term" value="F:metal ion binding"/>
    <property type="evidence" value="ECO:0007669"/>
    <property type="project" value="UniProtKB-KW"/>
</dbReference>
<dbReference type="GO" id="GO:0006281">
    <property type="term" value="P:DNA repair"/>
    <property type="evidence" value="ECO:0007669"/>
    <property type="project" value="UniProtKB-KW"/>
</dbReference>
<dbReference type="GO" id="GO:0006260">
    <property type="term" value="P:DNA replication"/>
    <property type="evidence" value="ECO:0007669"/>
    <property type="project" value="UniProtKB-KW"/>
</dbReference>
<dbReference type="CDD" id="cd17748">
    <property type="entry name" value="BRCT_DNA_ligase_like"/>
    <property type="match status" value="1"/>
</dbReference>
<dbReference type="CDD" id="cd00114">
    <property type="entry name" value="LIGANc"/>
    <property type="match status" value="1"/>
</dbReference>
<dbReference type="FunFam" id="1.10.150.20:FF:000006">
    <property type="entry name" value="DNA ligase"/>
    <property type="match status" value="1"/>
</dbReference>
<dbReference type="FunFam" id="1.10.150.20:FF:000007">
    <property type="entry name" value="DNA ligase"/>
    <property type="match status" value="1"/>
</dbReference>
<dbReference type="FunFam" id="1.10.287.610:FF:000002">
    <property type="entry name" value="DNA ligase"/>
    <property type="match status" value="1"/>
</dbReference>
<dbReference type="FunFam" id="2.40.50.140:FF:000012">
    <property type="entry name" value="DNA ligase"/>
    <property type="match status" value="1"/>
</dbReference>
<dbReference type="FunFam" id="3.30.470.30:FF:000001">
    <property type="entry name" value="DNA ligase"/>
    <property type="match status" value="1"/>
</dbReference>
<dbReference type="FunFam" id="3.40.50.10190:FF:000054">
    <property type="entry name" value="DNA ligase"/>
    <property type="match status" value="1"/>
</dbReference>
<dbReference type="Gene3D" id="6.20.10.30">
    <property type="match status" value="1"/>
</dbReference>
<dbReference type="Gene3D" id="1.10.150.20">
    <property type="entry name" value="5' to 3' exonuclease, C-terminal subdomain"/>
    <property type="match status" value="2"/>
</dbReference>
<dbReference type="Gene3D" id="3.40.50.10190">
    <property type="entry name" value="BRCT domain"/>
    <property type="match status" value="1"/>
</dbReference>
<dbReference type="Gene3D" id="3.30.470.30">
    <property type="entry name" value="DNA ligase/mRNA capping enzyme"/>
    <property type="match status" value="1"/>
</dbReference>
<dbReference type="Gene3D" id="1.10.287.610">
    <property type="entry name" value="Helix hairpin bin"/>
    <property type="match status" value="1"/>
</dbReference>
<dbReference type="Gene3D" id="2.40.50.140">
    <property type="entry name" value="Nucleic acid-binding proteins"/>
    <property type="match status" value="1"/>
</dbReference>
<dbReference type="HAMAP" id="MF_01588">
    <property type="entry name" value="DNA_ligase_A"/>
    <property type="match status" value="1"/>
</dbReference>
<dbReference type="InterPro" id="IPR001357">
    <property type="entry name" value="BRCT_dom"/>
</dbReference>
<dbReference type="InterPro" id="IPR036420">
    <property type="entry name" value="BRCT_dom_sf"/>
</dbReference>
<dbReference type="InterPro" id="IPR041663">
    <property type="entry name" value="DisA/LigA_HHH"/>
</dbReference>
<dbReference type="InterPro" id="IPR001679">
    <property type="entry name" value="DNA_ligase"/>
</dbReference>
<dbReference type="InterPro" id="IPR018239">
    <property type="entry name" value="DNA_ligase_AS"/>
</dbReference>
<dbReference type="InterPro" id="IPR033136">
    <property type="entry name" value="DNA_ligase_CS"/>
</dbReference>
<dbReference type="InterPro" id="IPR013839">
    <property type="entry name" value="DNAligase_adenylation"/>
</dbReference>
<dbReference type="InterPro" id="IPR013840">
    <property type="entry name" value="DNAligase_N"/>
</dbReference>
<dbReference type="InterPro" id="IPR003583">
    <property type="entry name" value="Hlx-hairpin-Hlx_DNA-bd_motif"/>
</dbReference>
<dbReference type="InterPro" id="IPR012340">
    <property type="entry name" value="NA-bd_OB-fold"/>
</dbReference>
<dbReference type="InterPro" id="IPR004150">
    <property type="entry name" value="NAD_DNA_ligase_OB"/>
</dbReference>
<dbReference type="InterPro" id="IPR010994">
    <property type="entry name" value="RuvA_2-like"/>
</dbReference>
<dbReference type="InterPro" id="IPR004149">
    <property type="entry name" value="Znf_DNAligase_C4"/>
</dbReference>
<dbReference type="NCBIfam" id="TIGR00575">
    <property type="entry name" value="dnlj"/>
    <property type="match status" value="1"/>
</dbReference>
<dbReference type="NCBIfam" id="NF005932">
    <property type="entry name" value="PRK07956.1"/>
    <property type="match status" value="1"/>
</dbReference>
<dbReference type="PANTHER" id="PTHR23389">
    <property type="entry name" value="CHROMOSOME TRANSMISSION FIDELITY FACTOR 18"/>
    <property type="match status" value="1"/>
</dbReference>
<dbReference type="PANTHER" id="PTHR23389:SF6">
    <property type="entry name" value="REPLICATION FACTOR C SUBUNIT 1"/>
    <property type="match status" value="1"/>
</dbReference>
<dbReference type="Pfam" id="PF00533">
    <property type="entry name" value="BRCT"/>
    <property type="match status" value="1"/>
</dbReference>
<dbReference type="Pfam" id="PF01653">
    <property type="entry name" value="DNA_ligase_aden"/>
    <property type="match status" value="1"/>
</dbReference>
<dbReference type="Pfam" id="PF03120">
    <property type="entry name" value="DNA_ligase_OB"/>
    <property type="match status" value="1"/>
</dbReference>
<dbReference type="Pfam" id="PF03119">
    <property type="entry name" value="DNA_ligase_ZBD"/>
    <property type="match status" value="1"/>
</dbReference>
<dbReference type="Pfam" id="PF12826">
    <property type="entry name" value="HHH_2"/>
    <property type="match status" value="1"/>
</dbReference>
<dbReference type="Pfam" id="PF22745">
    <property type="entry name" value="Nlig-Ia"/>
    <property type="match status" value="1"/>
</dbReference>
<dbReference type="PIRSF" id="PIRSF001604">
    <property type="entry name" value="LigA"/>
    <property type="match status" value="1"/>
</dbReference>
<dbReference type="SMART" id="SM00292">
    <property type="entry name" value="BRCT"/>
    <property type="match status" value="1"/>
</dbReference>
<dbReference type="SMART" id="SM00278">
    <property type="entry name" value="HhH1"/>
    <property type="match status" value="3"/>
</dbReference>
<dbReference type="SMART" id="SM00532">
    <property type="entry name" value="LIGANc"/>
    <property type="match status" value="1"/>
</dbReference>
<dbReference type="SUPFAM" id="SSF52113">
    <property type="entry name" value="BRCT domain"/>
    <property type="match status" value="1"/>
</dbReference>
<dbReference type="SUPFAM" id="SSF56091">
    <property type="entry name" value="DNA ligase/mRNA capping enzyme, catalytic domain"/>
    <property type="match status" value="1"/>
</dbReference>
<dbReference type="SUPFAM" id="SSF50249">
    <property type="entry name" value="Nucleic acid-binding proteins"/>
    <property type="match status" value="1"/>
</dbReference>
<dbReference type="SUPFAM" id="SSF47781">
    <property type="entry name" value="RuvA domain 2-like"/>
    <property type="match status" value="1"/>
</dbReference>
<dbReference type="PROSITE" id="PS50172">
    <property type="entry name" value="BRCT"/>
    <property type="match status" value="1"/>
</dbReference>
<dbReference type="PROSITE" id="PS01055">
    <property type="entry name" value="DNA_LIGASE_N1"/>
    <property type="match status" value="1"/>
</dbReference>
<dbReference type="PROSITE" id="PS01056">
    <property type="entry name" value="DNA_LIGASE_N2"/>
    <property type="match status" value="1"/>
</dbReference>
<sequence length="690" mass="75199">MATNDLFPPEPPLPDPAHVAQLRRALHEHAHHYYVEDAPTIPDAEYDRMFQELQAIEAQHPELITPDSPTQRVGGRALEQFASVRHAVPMLSIRTETDTEASGARNFDTRVRRELGLDEAAPAVAYVAEPKFDGLAMNLRYESGILVQAATRGDGEVGEDVTQNVRTIGQIPLRLPADAPSILEVRGEVYMRRDDFEKLNEQQRARGQKTFVNPRNAAAGAVRQLDPAIAAQRPLSFFAYGLGEVTPEQAGGPAFGTHYELLQALKTWGFPVSALVGLAQGATELVAYYESIARQRDALPFDIDGVVYKVNSLALQRRMGFVTREPRWAVAHKFPAQEQFTTVLDIDVQVGRTGKLTPVAKLAPVFVGGVTVTNATLHNEDEARRKDVRVGDTVIVRRAGDVIPEVVSVLLDKRQPGATEFTMPRQCPVCGSAAVREEGEVDYRCTGGLFCSAQRKQAILHFAQRRAVEVEGLGEKLVDQLVDGHVIRILPDLYRLGLTALASLDRMADKSAQNILQALEKSKQTTLPRFLFGLGIRHVGEATAKELARHFGSLDAVMDASLEQLLQVNDIGPIVAQSLRTFFDQPHNREVVEQLRACGVTWQEGPPAPVTPTPLSGKTFVITGTLPSMSRDEAKDLIEAAGGKVAGSVSKKTTFVVAGTEAGSKLTKAQELGVAVLDEAGLKELLDGHS</sequence>
<gene>
    <name evidence="1" type="primary">ligA</name>
    <name type="ordered locus">Rfer_2201</name>
</gene>
<organism>
    <name type="scientific">Albidiferax ferrireducens (strain ATCC BAA-621 / DSM 15236 / T118)</name>
    <name type="common">Rhodoferax ferrireducens</name>
    <dbReference type="NCBI Taxonomy" id="338969"/>
    <lineage>
        <taxon>Bacteria</taxon>
        <taxon>Pseudomonadati</taxon>
        <taxon>Pseudomonadota</taxon>
        <taxon>Betaproteobacteria</taxon>
        <taxon>Burkholderiales</taxon>
        <taxon>Comamonadaceae</taxon>
        <taxon>Rhodoferax</taxon>
    </lineage>
</organism>
<comment type="function">
    <text evidence="1">DNA ligase that catalyzes the formation of phosphodiester linkages between 5'-phosphoryl and 3'-hydroxyl groups in double-stranded DNA using NAD as a coenzyme and as the energy source for the reaction. It is essential for DNA replication and repair of damaged DNA.</text>
</comment>
<comment type="catalytic activity">
    <reaction evidence="1">
        <text>NAD(+) + (deoxyribonucleotide)n-3'-hydroxyl + 5'-phospho-(deoxyribonucleotide)m = (deoxyribonucleotide)n+m + AMP + beta-nicotinamide D-nucleotide.</text>
        <dbReference type="EC" id="6.5.1.2"/>
    </reaction>
</comment>
<comment type="cofactor">
    <cofactor evidence="1">
        <name>Mg(2+)</name>
        <dbReference type="ChEBI" id="CHEBI:18420"/>
    </cofactor>
    <cofactor evidence="1">
        <name>Mn(2+)</name>
        <dbReference type="ChEBI" id="CHEBI:29035"/>
    </cofactor>
</comment>
<comment type="similarity">
    <text evidence="1">Belongs to the NAD-dependent DNA ligase family. LigA subfamily.</text>
</comment>